<geneLocation type="mitochondrion"/>
<evidence type="ECO:0000250" key="1">
    <source>
        <dbReference type="UniProtKB" id="P00395"/>
    </source>
</evidence>
<evidence type="ECO:0000250" key="2">
    <source>
        <dbReference type="UniProtKB" id="P00396"/>
    </source>
</evidence>
<evidence type="ECO:0000250" key="3">
    <source>
        <dbReference type="UniProtKB" id="P00401"/>
    </source>
</evidence>
<evidence type="ECO:0000305" key="4"/>
<keyword id="KW-0106">Calcium</keyword>
<keyword id="KW-0186">Copper</keyword>
<keyword id="KW-0249">Electron transport</keyword>
<keyword id="KW-0349">Heme</keyword>
<keyword id="KW-0408">Iron</keyword>
<keyword id="KW-0460">Magnesium</keyword>
<keyword id="KW-0472">Membrane</keyword>
<keyword id="KW-0479">Metal-binding</keyword>
<keyword id="KW-0496">Mitochondrion</keyword>
<keyword id="KW-0999">Mitochondrion inner membrane</keyword>
<keyword id="KW-0679">Respiratory chain</keyword>
<keyword id="KW-0915">Sodium</keyword>
<keyword id="KW-1278">Translocase</keyword>
<keyword id="KW-0812">Transmembrane</keyword>
<keyword id="KW-1133">Transmembrane helix</keyword>
<keyword id="KW-0813">Transport</keyword>
<accession>Q6EGI0</accession>
<sequence length="516" mass="57088">MFINRWLFSTNHKDIGTLYMIFGAWAGMVGTGLSILIRAELGQPGSLLGDDQIYNVVVTAHAFVMIFFMVMPIMIGGFGNWLVPLMIGAPDMAFPRMNNMSFWLLPPSFLLLLASSMVEAGAGTGWTVYPPLAGNLAHAGASVDLTIFSLHLAGVSSILGAINFITTIINMKPPAITQYQTPLFVWSVMITAVLLLLSLPVLAAGITMLLTDRNLNTTFFDPAGGGDPILYQHLFWFFGHPEVYILILPGFGMISHIVTYYSGKKEPFGYMGMVWAMMSIGFLGFIVWAHHMFTVGMDVDTRAYFTSATMIIAIPTGVKVFSWLATLHGGNIKWSPAMLWALGFIFLFTIGGLTGIVLSNSSLDIVLHDTYYVVAHFHYVLSMGAVFAIMGGFVHWFPLFTGYTLNDTWAKIHFTIMFVGVNMTFFPQHFLGLAGMPRRYSDYPDAYTTWNTISSMGSFISLTAVILMVFMIWEALASKRVVKSVPLTSTNLEWMHGCPPPFHTFEEPAFIKSSSK</sequence>
<dbReference type="EC" id="7.1.1.9"/>
<dbReference type="EMBL" id="AY331084">
    <property type="protein sequence ID" value="AAR02585.1"/>
    <property type="molecule type" value="Genomic_DNA"/>
</dbReference>
<dbReference type="SMR" id="Q6EGI0"/>
<dbReference type="UniPathway" id="UPA00705"/>
<dbReference type="GO" id="GO:0005743">
    <property type="term" value="C:mitochondrial inner membrane"/>
    <property type="evidence" value="ECO:0007669"/>
    <property type="project" value="UniProtKB-SubCell"/>
</dbReference>
<dbReference type="GO" id="GO:0045277">
    <property type="term" value="C:respiratory chain complex IV"/>
    <property type="evidence" value="ECO:0000250"/>
    <property type="project" value="UniProtKB"/>
</dbReference>
<dbReference type="GO" id="GO:0004129">
    <property type="term" value="F:cytochrome-c oxidase activity"/>
    <property type="evidence" value="ECO:0007669"/>
    <property type="project" value="UniProtKB-EC"/>
</dbReference>
<dbReference type="GO" id="GO:0020037">
    <property type="term" value="F:heme binding"/>
    <property type="evidence" value="ECO:0007669"/>
    <property type="project" value="InterPro"/>
</dbReference>
<dbReference type="GO" id="GO:0046872">
    <property type="term" value="F:metal ion binding"/>
    <property type="evidence" value="ECO:0007669"/>
    <property type="project" value="UniProtKB-KW"/>
</dbReference>
<dbReference type="GO" id="GO:0015990">
    <property type="term" value="P:electron transport coupled proton transport"/>
    <property type="evidence" value="ECO:0007669"/>
    <property type="project" value="TreeGrafter"/>
</dbReference>
<dbReference type="GO" id="GO:0006123">
    <property type="term" value="P:mitochondrial electron transport, cytochrome c to oxygen"/>
    <property type="evidence" value="ECO:0007669"/>
    <property type="project" value="TreeGrafter"/>
</dbReference>
<dbReference type="CDD" id="cd01663">
    <property type="entry name" value="Cyt_c_Oxidase_I"/>
    <property type="match status" value="1"/>
</dbReference>
<dbReference type="FunFam" id="1.20.210.10:FF:000001">
    <property type="entry name" value="Cytochrome c oxidase subunit 1"/>
    <property type="match status" value="1"/>
</dbReference>
<dbReference type="Gene3D" id="1.20.210.10">
    <property type="entry name" value="Cytochrome c oxidase-like, subunit I domain"/>
    <property type="match status" value="1"/>
</dbReference>
<dbReference type="InterPro" id="IPR023616">
    <property type="entry name" value="Cyt_c_oxase-like_su1_dom"/>
</dbReference>
<dbReference type="InterPro" id="IPR036927">
    <property type="entry name" value="Cyt_c_oxase-like_su1_sf"/>
</dbReference>
<dbReference type="InterPro" id="IPR000883">
    <property type="entry name" value="Cyt_C_Oxase_1"/>
</dbReference>
<dbReference type="InterPro" id="IPR023615">
    <property type="entry name" value="Cyt_c_Oxase_su1_BS"/>
</dbReference>
<dbReference type="InterPro" id="IPR033944">
    <property type="entry name" value="Cyt_c_oxase_su1_dom"/>
</dbReference>
<dbReference type="PANTHER" id="PTHR10422">
    <property type="entry name" value="CYTOCHROME C OXIDASE SUBUNIT 1"/>
    <property type="match status" value="1"/>
</dbReference>
<dbReference type="PANTHER" id="PTHR10422:SF18">
    <property type="entry name" value="CYTOCHROME C OXIDASE SUBUNIT 1"/>
    <property type="match status" value="1"/>
</dbReference>
<dbReference type="Pfam" id="PF00115">
    <property type="entry name" value="COX1"/>
    <property type="match status" value="1"/>
</dbReference>
<dbReference type="PRINTS" id="PR01165">
    <property type="entry name" value="CYCOXIDASEI"/>
</dbReference>
<dbReference type="SUPFAM" id="SSF81442">
    <property type="entry name" value="Cytochrome c oxidase subunit I-like"/>
    <property type="match status" value="1"/>
</dbReference>
<dbReference type="PROSITE" id="PS50855">
    <property type="entry name" value="COX1"/>
    <property type="match status" value="1"/>
</dbReference>
<dbReference type="PROSITE" id="PS00077">
    <property type="entry name" value="COX1_CUB"/>
    <property type="match status" value="1"/>
</dbReference>
<name>COX1_PAPBU</name>
<organism>
    <name type="scientific">Pappogeomys bulleri</name>
    <name type="common">Buller's pocket gopher</name>
    <dbReference type="NCBI Taxonomy" id="13628"/>
    <lineage>
        <taxon>Eukaryota</taxon>
        <taxon>Metazoa</taxon>
        <taxon>Chordata</taxon>
        <taxon>Craniata</taxon>
        <taxon>Vertebrata</taxon>
        <taxon>Euteleostomi</taxon>
        <taxon>Mammalia</taxon>
        <taxon>Eutheria</taxon>
        <taxon>Euarchontoglires</taxon>
        <taxon>Glires</taxon>
        <taxon>Rodentia</taxon>
        <taxon>Castorimorpha</taxon>
        <taxon>Geomyidae</taxon>
        <taxon>Pappogeomys</taxon>
    </lineage>
</organism>
<reference key="1">
    <citation type="journal article" date="2004" name="J. Mammal. Evol.">
        <title>DNA data support a rapid radiation of pocket gopher genera.</title>
        <authorList>
            <person name="Spradling T.A."/>
            <person name="Brant S.V."/>
            <person name="Hafner M.S."/>
            <person name="Dickerson C.J."/>
        </authorList>
    </citation>
    <scope>NUCLEOTIDE SEQUENCE [GENOMIC DNA]</scope>
</reference>
<proteinExistence type="inferred from homology"/>
<protein>
    <recommendedName>
        <fullName>Cytochrome c oxidase subunit 1</fullName>
        <ecNumber>7.1.1.9</ecNumber>
    </recommendedName>
    <alternativeName>
        <fullName>Cytochrome c oxidase polypeptide I</fullName>
    </alternativeName>
</protein>
<feature type="chain" id="PRO_0000183380" description="Cytochrome c oxidase subunit 1">
    <location>
        <begin position="1"/>
        <end position="516"/>
    </location>
</feature>
<feature type="topological domain" description="Mitochondrial matrix" evidence="2">
    <location>
        <begin position="1"/>
        <end position="11"/>
    </location>
</feature>
<feature type="transmembrane region" description="Helical; Name=I" evidence="2">
    <location>
        <begin position="12"/>
        <end position="40"/>
    </location>
</feature>
<feature type="topological domain" description="Mitochondrial intermembrane" evidence="2">
    <location>
        <begin position="41"/>
        <end position="50"/>
    </location>
</feature>
<feature type="transmembrane region" description="Helical; Name=II" evidence="2">
    <location>
        <begin position="51"/>
        <end position="86"/>
    </location>
</feature>
<feature type="topological domain" description="Mitochondrial matrix" evidence="2">
    <location>
        <begin position="87"/>
        <end position="94"/>
    </location>
</feature>
<feature type="transmembrane region" description="Helical; Name=III" evidence="2">
    <location>
        <begin position="95"/>
        <end position="117"/>
    </location>
</feature>
<feature type="topological domain" description="Mitochondrial intermembrane" evidence="2">
    <location>
        <begin position="118"/>
        <end position="140"/>
    </location>
</feature>
<feature type="transmembrane region" description="Helical; Name=IV" evidence="2">
    <location>
        <begin position="141"/>
        <end position="170"/>
    </location>
</feature>
<feature type="topological domain" description="Mitochondrial matrix" evidence="2">
    <location>
        <begin position="171"/>
        <end position="182"/>
    </location>
</feature>
<feature type="transmembrane region" description="Helical; Name=V" evidence="2">
    <location>
        <begin position="183"/>
        <end position="212"/>
    </location>
</feature>
<feature type="topological domain" description="Mitochondrial intermembrane" evidence="2">
    <location>
        <begin position="213"/>
        <end position="227"/>
    </location>
</feature>
<feature type="transmembrane region" description="Helical; Name=VI" evidence="2">
    <location>
        <begin position="228"/>
        <end position="261"/>
    </location>
</feature>
<feature type="topological domain" description="Mitochondrial matrix" evidence="2">
    <location>
        <begin position="262"/>
        <end position="269"/>
    </location>
</feature>
<feature type="transmembrane region" description="Helical; Name=VII" evidence="2">
    <location>
        <begin position="270"/>
        <end position="286"/>
    </location>
</feature>
<feature type="topological domain" description="Mitochondrial intermembrane" evidence="2">
    <location>
        <begin position="287"/>
        <end position="298"/>
    </location>
</feature>
<feature type="transmembrane region" description="Helical; Name=VIII" evidence="2">
    <location>
        <begin position="299"/>
        <end position="327"/>
    </location>
</feature>
<feature type="topological domain" description="Mitochondrial matrix" evidence="2">
    <location>
        <begin position="328"/>
        <end position="335"/>
    </location>
</feature>
<feature type="transmembrane region" description="Helical; Name=IX" evidence="2">
    <location>
        <begin position="336"/>
        <end position="357"/>
    </location>
</feature>
<feature type="topological domain" description="Mitochondrial intermembrane" evidence="2">
    <location>
        <begin position="358"/>
        <end position="370"/>
    </location>
</feature>
<feature type="transmembrane region" description="Helical; Name=X" evidence="2">
    <location>
        <begin position="371"/>
        <end position="400"/>
    </location>
</feature>
<feature type="topological domain" description="Mitochondrial matrix" evidence="2">
    <location>
        <begin position="401"/>
        <end position="406"/>
    </location>
</feature>
<feature type="transmembrane region" description="Helical; Name=XI" evidence="2">
    <location>
        <begin position="407"/>
        <end position="433"/>
    </location>
</feature>
<feature type="topological domain" description="Mitochondrial intermembrane" evidence="2">
    <location>
        <begin position="434"/>
        <end position="446"/>
    </location>
</feature>
<feature type="transmembrane region" description="Helical; Name=XII" evidence="2">
    <location>
        <begin position="447"/>
        <end position="478"/>
    </location>
</feature>
<feature type="topological domain" description="Mitochondrial matrix" evidence="2">
    <location>
        <begin position="479"/>
        <end position="516"/>
    </location>
</feature>
<feature type="binding site" evidence="2">
    <location>
        <position position="40"/>
    </location>
    <ligand>
        <name>Na(+)</name>
        <dbReference type="ChEBI" id="CHEBI:29101"/>
    </ligand>
</feature>
<feature type="binding site" evidence="2">
    <location>
        <position position="45"/>
    </location>
    <ligand>
        <name>Na(+)</name>
        <dbReference type="ChEBI" id="CHEBI:29101"/>
    </ligand>
</feature>
<feature type="binding site" description="axial binding residue" evidence="2">
    <location>
        <position position="61"/>
    </location>
    <ligand>
        <name>Fe(II)-heme a</name>
        <dbReference type="ChEBI" id="CHEBI:61715"/>
        <note>low-spin</note>
    </ligand>
    <ligandPart>
        <name>Fe</name>
        <dbReference type="ChEBI" id="CHEBI:18248"/>
    </ligandPart>
</feature>
<feature type="binding site" evidence="2">
    <location>
        <position position="240"/>
    </location>
    <ligand>
        <name>Cu cation</name>
        <dbReference type="ChEBI" id="CHEBI:23378"/>
        <label>B</label>
    </ligand>
</feature>
<feature type="binding site" evidence="2">
    <location>
        <position position="244"/>
    </location>
    <ligand>
        <name>O2</name>
        <dbReference type="ChEBI" id="CHEBI:15379"/>
    </ligand>
</feature>
<feature type="binding site" evidence="2">
    <location>
        <position position="290"/>
    </location>
    <ligand>
        <name>Cu cation</name>
        <dbReference type="ChEBI" id="CHEBI:23378"/>
        <label>B</label>
    </ligand>
</feature>
<feature type="binding site" evidence="2">
    <location>
        <position position="291"/>
    </location>
    <ligand>
        <name>Cu cation</name>
        <dbReference type="ChEBI" id="CHEBI:23378"/>
        <label>B</label>
    </ligand>
</feature>
<feature type="binding site" evidence="2">
    <location>
        <position position="368"/>
    </location>
    <ligand>
        <name>Mg(2+)</name>
        <dbReference type="ChEBI" id="CHEBI:18420"/>
        <note>ligand shared with MT-CO2</note>
    </ligand>
</feature>
<feature type="binding site" evidence="2">
    <location>
        <position position="369"/>
    </location>
    <ligand>
        <name>Mg(2+)</name>
        <dbReference type="ChEBI" id="CHEBI:18420"/>
        <note>ligand shared with MT-CO2</note>
    </ligand>
</feature>
<feature type="binding site" description="axial binding residue" evidence="2">
    <location>
        <position position="376"/>
    </location>
    <ligand>
        <name>heme a3</name>
        <dbReference type="ChEBI" id="CHEBI:83282"/>
        <note>high-spin</note>
    </ligand>
    <ligandPart>
        <name>Fe</name>
        <dbReference type="ChEBI" id="CHEBI:18248"/>
    </ligandPart>
</feature>
<feature type="binding site" description="axial binding residue" evidence="2">
    <location>
        <position position="378"/>
    </location>
    <ligand>
        <name>Fe(II)-heme a</name>
        <dbReference type="ChEBI" id="CHEBI:61715"/>
        <note>low-spin</note>
    </ligand>
    <ligandPart>
        <name>Fe</name>
        <dbReference type="ChEBI" id="CHEBI:18248"/>
    </ligandPart>
</feature>
<feature type="binding site" evidence="2">
    <location>
        <position position="441"/>
    </location>
    <ligand>
        <name>Na(+)</name>
        <dbReference type="ChEBI" id="CHEBI:29101"/>
    </ligand>
</feature>
<feature type="cross-link" description="1'-histidyl-3'-tyrosine (His-Tyr)" evidence="2">
    <location>
        <begin position="240"/>
        <end position="244"/>
    </location>
</feature>
<comment type="function">
    <text evidence="3">Component of the cytochrome c oxidase, the last enzyme in the mitochondrial electron transport chain which drives oxidative phosphorylation. The respiratory chain contains 3 multisubunit complexes succinate dehydrogenase (complex II, CII), ubiquinol-cytochrome c oxidoreductase (cytochrome b-c1 complex, complex III, CIII) and cytochrome c oxidase (complex IV, CIV), that cooperate to transfer electrons derived from NADH and succinate to molecular oxygen, creating an electrochemical gradient over the inner membrane that drives transmembrane transport and the ATP synthase. Cytochrome c oxidase is the component of the respiratory chain that catalyzes the reduction of oxygen to water. Electrons originating from reduced cytochrome c in the intermembrane space (IMS) are transferred via the dinuclear copper A center (CU(A)) of subunit 2 and heme A of subunit 1 to the active site in subunit 1, a binuclear center (BNC) formed by heme A3 and copper B (CU(B)). The BNC reduces molecular oxygen to 2 water molecules using 4 electrons from cytochrome c in the IMS and 4 protons from the mitochondrial matrix.</text>
</comment>
<comment type="catalytic activity">
    <reaction evidence="3">
        <text>4 Fe(II)-[cytochrome c] + O2 + 8 H(+)(in) = 4 Fe(III)-[cytochrome c] + 2 H2O + 4 H(+)(out)</text>
        <dbReference type="Rhea" id="RHEA:11436"/>
        <dbReference type="Rhea" id="RHEA-COMP:10350"/>
        <dbReference type="Rhea" id="RHEA-COMP:14399"/>
        <dbReference type="ChEBI" id="CHEBI:15377"/>
        <dbReference type="ChEBI" id="CHEBI:15378"/>
        <dbReference type="ChEBI" id="CHEBI:15379"/>
        <dbReference type="ChEBI" id="CHEBI:29033"/>
        <dbReference type="ChEBI" id="CHEBI:29034"/>
        <dbReference type="EC" id="7.1.1.9"/>
    </reaction>
    <physiologicalReaction direction="left-to-right" evidence="3">
        <dbReference type="Rhea" id="RHEA:11437"/>
    </physiologicalReaction>
</comment>
<comment type="cofactor">
    <cofactor evidence="2">
        <name>heme</name>
        <dbReference type="ChEBI" id="CHEBI:30413"/>
    </cofactor>
    <text evidence="2">Binds 2 heme A groups non-covalently per subunit.</text>
</comment>
<comment type="cofactor">
    <cofactor evidence="2">
        <name>Cu cation</name>
        <dbReference type="ChEBI" id="CHEBI:23378"/>
    </cofactor>
    <text evidence="2">Binds a copper B center.</text>
</comment>
<comment type="pathway">
    <text evidence="3">Energy metabolism; oxidative phosphorylation.</text>
</comment>
<comment type="subunit">
    <text evidence="1 2">Component of the cytochrome c oxidase (complex IV, CIV), a multisubunit enzyme composed of 14 subunits. The complex is composed of a catalytic core of 3 subunits MT-CO1, MT-CO2 and MT-CO3, encoded in the mitochondrial DNA, and 11 supernumerary subunits COX4I, COX5A, COX5B, COX6A, COX6B, COX6C, COX7A, COX7B, COX7C, COX8 and NDUFA4, which are encoded in the nuclear genome. The complex exists as a monomer or a dimer and forms supercomplexes (SCs) in the inner mitochondrial membrane with NADH-ubiquinone oxidoreductase (complex I, CI) and ubiquinol-cytochrome c oxidoreductase (cytochrome b-c1 complex, complex III, CIII), resulting in different assemblies (supercomplex SCI(1)III(2)IV(1) and megacomplex MCI(2)III(2)IV(2)) (By similarity). As a newly synthesized protein, rapidly incorporates into a multi-subunit assembly intermediate in the inner membrane, called MITRAC (mitochondrial translation regulation assembly intermediate of cytochrome c oxidase) complex, whose core components are COA3/MITRAC12 and COX14. Within the MITRAC complex, interacts with COA3 and with SMIM20/MITRAC7; the interaction with SMIM20 stabilizes the newly synthesized MT-CO1 and prevents its premature turnover. Interacts with TMEM177 in a COX20-dependent manner (By similarity).</text>
</comment>
<comment type="subcellular location">
    <subcellularLocation>
        <location evidence="2">Mitochondrion inner membrane</location>
        <topology evidence="2">Multi-pass membrane protein</topology>
    </subcellularLocation>
</comment>
<comment type="similarity">
    <text evidence="4">Belongs to the heme-copper respiratory oxidase family.</text>
</comment>
<gene>
    <name type="primary">MT-CO1</name>
    <name type="synonym">COI</name>
    <name type="synonym">COXI</name>
    <name type="synonym">MTCO1</name>
</gene>